<keyword id="KW-0010">Activator</keyword>
<keyword id="KW-0539">Nucleus</keyword>
<keyword id="KW-1185">Reference proteome</keyword>
<keyword id="KW-0804">Transcription</keyword>
<keyword id="KW-0805">Transcription regulation</keyword>
<accession>Q6INP8</accession>
<reference key="1">
    <citation type="submission" date="2004-06" db="EMBL/GenBank/DDBJ databases">
        <authorList>
            <consortium name="NIH - Xenopus Gene Collection (XGC) project"/>
        </authorList>
    </citation>
    <scope>NUCLEOTIDE SEQUENCE [LARGE SCALE MRNA]</scope>
    <source>
        <tissue>Embryo</tissue>
    </source>
</reference>
<comment type="function">
    <text evidence="1">Component of the Mediator complex, a coactivator involved in the regulated transcription of nearly all RNA polymerase II-dependent genes. Mediator functions as a bridge to convey information from gene-specific regulatory proteins to the basal RNA polymerase II transcription machinery. Mediator is recruited to promoters by direct interactions with regulatory proteins and serves as a scaffold for the assembly of a functional preinitiation complex with RNA polymerase II and the general transcription factors (By similarity).</text>
</comment>
<comment type="subunit">
    <text evidence="1">Component of the Mediator complex.</text>
</comment>
<comment type="subcellular location">
    <subcellularLocation>
        <location evidence="1">Nucleus</location>
    </subcellularLocation>
</comment>
<comment type="similarity">
    <text evidence="3">Belongs to the Mediator complex subunit 1 family.</text>
</comment>
<organism>
    <name type="scientific">Xenopus laevis</name>
    <name type="common">African clawed frog</name>
    <dbReference type="NCBI Taxonomy" id="8355"/>
    <lineage>
        <taxon>Eukaryota</taxon>
        <taxon>Metazoa</taxon>
        <taxon>Chordata</taxon>
        <taxon>Craniata</taxon>
        <taxon>Vertebrata</taxon>
        <taxon>Euteleostomi</taxon>
        <taxon>Amphibia</taxon>
        <taxon>Batrachia</taxon>
        <taxon>Anura</taxon>
        <taxon>Pipoidea</taxon>
        <taxon>Pipidae</taxon>
        <taxon>Xenopodinae</taxon>
        <taxon>Xenopus</taxon>
        <taxon>Xenopus</taxon>
    </lineage>
</organism>
<evidence type="ECO:0000250" key="1">
    <source>
        <dbReference type="UniProtKB" id="Q15648"/>
    </source>
</evidence>
<evidence type="ECO:0000256" key="2">
    <source>
        <dbReference type="SAM" id="MobiDB-lite"/>
    </source>
</evidence>
<evidence type="ECO:0000305" key="3"/>
<proteinExistence type="evidence at transcript level"/>
<dbReference type="EMBL" id="BC072226">
    <property type="protein sequence ID" value="AAH72226.1"/>
    <property type="molecule type" value="mRNA"/>
</dbReference>
<dbReference type="RefSeq" id="NP_001085198.1">
    <property type="nucleotide sequence ID" value="NM_001091729.1"/>
</dbReference>
<dbReference type="SMR" id="Q6INP8"/>
<dbReference type="DNASU" id="432291"/>
<dbReference type="GeneID" id="432291"/>
<dbReference type="KEGG" id="xla:432291"/>
<dbReference type="CTD" id="432291"/>
<dbReference type="OMA" id="NMKERHE"/>
<dbReference type="OrthoDB" id="2281547at2759"/>
<dbReference type="Proteomes" id="UP000186698">
    <property type="component" value="Chromosome 9_10L"/>
</dbReference>
<dbReference type="Bgee" id="432291">
    <property type="expression patterns" value="Expressed in egg cell and 19 other cell types or tissues"/>
</dbReference>
<dbReference type="GO" id="GO:0016592">
    <property type="term" value="C:mediator complex"/>
    <property type="evidence" value="ECO:0000318"/>
    <property type="project" value="GO_Central"/>
</dbReference>
<dbReference type="GO" id="GO:0042974">
    <property type="term" value="F:nuclear retinoic acid receptor binding"/>
    <property type="evidence" value="ECO:0000318"/>
    <property type="project" value="GO_Central"/>
</dbReference>
<dbReference type="GO" id="GO:0046966">
    <property type="term" value="F:nuclear thyroid hormone receptor binding"/>
    <property type="evidence" value="ECO:0000318"/>
    <property type="project" value="GO_Central"/>
</dbReference>
<dbReference type="GO" id="GO:0042809">
    <property type="term" value="F:nuclear vitamin D receptor binding"/>
    <property type="evidence" value="ECO:0000318"/>
    <property type="project" value="GO_Central"/>
</dbReference>
<dbReference type="GO" id="GO:0003712">
    <property type="term" value="F:transcription coregulator activity"/>
    <property type="evidence" value="ECO:0000318"/>
    <property type="project" value="GO_Central"/>
</dbReference>
<dbReference type="GO" id="GO:0097067">
    <property type="term" value="P:cellular response to thyroid hormone stimulus"/>
    <property type="evidence" value="ECO:0000318"/>
    <property type="project" value="GO_Central"/>
</dbReference>
<dbReference type="GO" id="GO:0045944">
    <property type="term" value="P:positive regulation of transcription by RNA polymerase II"/>
    <property type="evidence" value="ECO:0007669"/>
    <property type="project" value="UniProtKB-ARBA"/>
</dbReference>
<dbReference type="GO" id="GO:0006357">
    <property type="term" value="P:regulation of transcription by RNA polymerase II"/>
    <property type="evidence" value="ECO:0000318"/>
    <property type="project" value="GO_Central"/>
</dbReference>
<dbReference type="InterPro" id="IPR051999">
    <property type="entry name" value="Mediator_complex_subunit_1"/>
</dbReference>
<dbReference type="InterPro" id="IPR019680">
    <property type="entry name" value="Mediator_Med1"/>
</dbReference>
<dbReference type="PANTHER" id="PTHR12881">
    <property type="entry name" value="MEDIATOR OF RNA POLYMERASE II TRANSCRIPTION SUBUNIT 1"/>
    <property type="match status" value="1"/>
</dbReference>
<dbReference type="PANTHER" id="PTHR12881:SF14">
    <property type="entry name" value="MEDIATOR OF RNA POLYMERASE II TRANSCRIPTION SUBUNIT 1"/>
    <property type="match status" value="1"/>
</dbReference>
<dbReference type="Pfam" id="PF10744">
    <property type="entry name" value="Med1"/>
    <property type="match status" value="1"/>
</dbReference>
<protein>
    <recommendedName>
        <fullName>Mediator of RNA polymerase II transcription subunit 1</fullName>
    </recommendedName>
    <alternativeName>
        <fullName>Mediator complex subunit 1</fullName>
    </alternativeName>
</protein>
<sequence>MSSLLERLHSKYSQNRPWPETIKLVRQIMEKRTGMMSGSHQHLVTCLETLQKALKVSSLSAMTDRLESIARQNGLTSHLSPNGTECYITTDMFYLEVLLDTEGQLCDVKVAHHRENPVSCPELVEQLREKNFEDFSQHLKGLVNLYKVPGDNKLETKMYLALQSLELDLTKMAAIYWQATNATVLEKILHGTVGYLTPRSGGQVMSLKYYVSPYDLFDDGTGASISLSEGHAVPRSLGMNVSVTIEATTSMYKLPIAPLIVGSHAMDNKGTPSFTSITNANSVDLPACFFLKFPQPIPVSRAFIQKIEHCTGIPLIDGSHTFLPHYELVTQFELAKEKDPGPLNHNMRFYASLPGQQHCYFLNKDAPLPDGRSLQGTLLSKIPFQHPSRVPVILSLIRHQVAYNTLIGSCVKRTMLKEDCPGLLQFEVAPLSDSCFSISFQHPVNDSLVCVVMDVQDSTHVSCKLYKGLSDALICTDDFITKVVQRCMSIPVTMRAIRRKAETIQADTPALSLIAETVEDMVKKNLPPASSPGYGMTSALSGLTTPTSSYTSGQNSSLFNMGMKERHDSTGHGDDFNKVTQNPILTSLLQITNNTGGTLGSSPTQPQHTPPPVSSPASNTKNHPMLMNLLKDNPAQDFSNLYGGSPMERQNSSGSPRTELGASATGKPKKKRPRTGAEKMKNQTEDDFQRELFSMDVDSQNTIFDVGMAGDALDTPHITPAPSQCGTPPTVYQQSIPHAQSNMQRMVRIPSTDAIIPDVTDILSDIAEEASKLSGPGEDCPNLGTPVRDSSSSGHSQSTLFDTDVFQVDGGGGSGGENPYPDPVDLIVDSHGSPNSDSPNTFFNSVDFNPDLLNSQSQSGFTDDLNDDSSQSGDNDFKDFAGPGLASLNIVSGLPVDGGDGKYKMGLGADTLDFSIISTGGSKTLGGPDIQETQSRSQSPLLSNDLGKDRPQKQKVKESSNGGGAGGGLSGMQSAGMEGKSMKRSRTPSSDGKSKDKPPKRKKTESDGKSPSHITNRPFTPPTSTGGSKSPGTSGRSQTPPGMATPPIPKITIQIPKGTVSVGKPSSHGQYSSSGSSSSSSSKSHHGHSSLSSSASGKIKSNKSDGSSGMKIGSSGGGMYSGQSGQSSSQSKNSSQSMGKAGSSPITKHGLSSNVSNSSGSKTKPQGKPSVLMNPSLSKPNISPSHSRPSGGSDKMSSPMKPMPGTPPSSKAKSPIGSGGQHLSGGGSNSTTKSSSGLVSSGSLSQKPNSSSSSSSSSSSSSSSSSSSSSSFCGGVSQNLHGNSKGKSPSRNKKPSLTAVIDKLKHGVGTGGPGSEDPMDGGGGGGSTGAPSHGMSSKHGMVVGEFPTKREKSEKDKSKGSGSGGSSDPSKKGGGDSKGSVGTGVAKIIISKHDGGSPSIKAKVTLQKPEGGGDGLRSQMQKNYGSPLISGSTPKHERCSPSHNKSPAYTPQALDSESESGSSSIAEKSYQNSPSSDDGGGSGSRAQTEYSAEKHKKHKKEKKRLKDKDRDREKKKSYGMKPESWSKSPISADPTMAMSGGSMMSSDRGVRPTPSFLMDDDDLMDVPLTL</sequence>
<gene>
    <name type="primary">med1</name>
</gene>
<feature type="chain" id="PRO_0000302020" description="Mediator of RNA polymerase II transcription subunit 1">
    <location>
        <begin position="1"/>
        <end position="1570"/>
    </location>
</feature>
<feature type="region of interest" description="Disordered" evidence="2">
    <location>
        <begin position="592"/>
        <end position="687"/>
    </location>
</feature>
<feature type="region of interest" description="Disordered" evidence="2">
    <location>
        <begin position="771"/>
        <end position="880"/>
    </location>
</feature>
<feature type="region of interest" description="Disordered" evidence="2">
    <location>
        <begin position="922"/>
        <end position="1561"/>
    </location>
</feature>
<feature type="short sequence motif" description="LXXLL motif 1">
    <location>
        <begin position="585"/>
        <end position="589"/>
    </location>
</feature>
<feature type="short sequence motif" description="LXXLL motif 2">
    <location>
        <begin position="626"/>
        <end position="630"/>
    </location>
</feature>
<feature type="compositionally biased region" description="Basic and acidic residues" evidence="2">
    <location>
        <begin position="675"/>
        <end position="687"/>
    </location>
</feature>
<feature type="compositionally biased region" description="Polar residues" evidence="2">
    <location>
        <begin position="788"/>
        <end position="801"/>
    </location>
</feature>
<feature type="compositionally biased region" description="Polar residues" evidence="2">
    <location>
        <begin position="832"/>
        <end position="861"/>
    </location>
</feature>
<feature type="compositionally biased region" description="Polar residues" evidence="2">
    <location>
        <begin position="931"/>
        <end position="942"/>
    </location>
</feature>
<feature type="compositionally biased region" description="Basic and acidic residues" evidence="2">
    <location>
        <begin position="946"/>
        <end position="958"/>
    </location>
</feature>
<feature type="compositionally biased region" description="Gly residues" evidence="2">
    <location>
        <begin position="961"/>
        <end position="970"/>
    </location>
</feature>
<feature type="compositionally biased region" description="Low complexity" evidence="2">
    <location>
        <begin position="1022"/>
        <end position="1035"/>
    </location>
</feature>
<feature type="compositionally biased region" description="Low complexity" evidence="2">
    <location>
        <begin position="1066"/>
        <end position="1082"/>
    </location>
</feature>
<feature type="compositionally biased region" description="Low complexity" evidence="2">
    <location>
        <begin position="1089"/>
        <end position="1113"/>
    </location>
</feature>
<feature type="compositionally biased region" description="Low complexity" evidence="2">
    <location>
        <begin position="1121"/>
        <end position="1140"/>
    </location>
</feature>
<feature type="compositionally biased region" description="Low complexity" evidence="2">
    <location>
        <begin position="1152"/>
        <end position="1161"/>
    </location>
</feature>
<feature type="compositionally biased region" description="Polar residues" evidence="2">
    <location>
        <begin position="1173"/>
        <end position="1190"/>
    </location>
</feature>
<feature type="compositionally biased region" description="Gly residues" evidence="2">
    <location>
        <begin position="1217"/>
        <end position="1228"/>
    </location>
</feature>
<feature type="compositionally biased region" description="Low complexity" evidence="2">
    <location>
        <begin position="1229"/>
        <end position="1271"/>
    </location>
</feature>
<feature type="compositionally biased region" description="Polar residues" evidence="2">
    <location>
        <begin position="1276"/>
        <end position="1287"/>
    </location>
</feature>
<feature type="compositionally biased region" description="Gly residues" evidence="2">
    <location>
        <begin position="1308"/>
        <end position="1328"/>
    </location>
</feature>
<feature type="compositionally biased region" description="Basic and acidic residues" evidence="2">
    <location>
        <begin position="1347"/>
        <end position="1359"/>
    </location>
</feature>
<feature type="compositionally biased region" description="Polar residues" evidence="2">
    <location>
        <begin position="1418"/>
        <end position="1433"/>
    </location>
</feature>
<feature type="compositionally biased region" description="Polar residues" evidence="2">
    <location>
        <begin position="1441"/>
        <end position="1455"/>
    </location>
</feature>
<feature type="compositionally biased region" description="Low complexity" evidence="2">
    <location>
        <begin position="1459"/>
        <end position="1469"/>
    </location>
</feature>
<feature type="compositionally biased region" description="Basic residues" evidence="2">
    <location>
        <begin position="1494"/>
        <end position="1503"/>
    </location>
</feature>
<feature type="compositionally biased region" description="Basic and acidic residues" evidence="2">
    <location>
        <begin position="1504"/>
        <end position="1516"/>
    </location>
</feature>
<feature type="compositionally biased region" description="Low complexity" evidence="2">
    <location>
        <begin position="1536"/>
        <end position="1546"/>
    </location>
</feature>
<name>MED1_XENLA</name>